<reference key="1">
    <citation type="submission" date="2008-01" db="EMBL/GenBank/DDBJ databases">
        <title>Complete sequence of Thermoanaerobacter sp. X514.</title>
        <authorList>
            <consortium name="US DOE Joint Genome Institute"/>
            <person name="Copeland A."/>
            <person name="Lucas S."/>
            <person name="Lapidus A."/>
            <person name="Barry K."/>
            <person name="Glavina del Rio T."/>
            <person name="Dalin E."/>
            <person name="Tice H."/>
            <person name="Pitluck S."/>
            <person name="Bruce D."/>
            <person name="Goodwin L."/>
            <person name="Saunders E."/>
            <person name="Brettin T."/>
            <person name="Detter J.C."/>
            <person name="Han C."/>
            <person name="Schmutz J."/>
            <person name="Larimer F."/>
            <person name="Land M."/>
            <person name="Hauser L."/>
            <person name="Kyrpides N."/>
            <person name="Kim E."/>
            <person name="Hemme C."/>
            <person name="Fields M.W."/>
            <person name="He Z."/>
            <person name="Zhou J."/>
            <person name="Richardson P."/>
        </authorList>
    </citation>
    <scope>NUCLEOTIDE SEQUENCE [LARGE SCALE GENOMIC DNA]</scope>
    <source>
        <strain>X514</strain>
    </source>
</reference>
<accession>B0K0Y2</accession>
<sequence>MGLTLTQKILSAKIGREVKAGELIEVDVDMVLGNDVTAPVAIKEFEKIGKEEVFDKTKIALVPDHFVPNKDIKSAEQVNIMRKFAKKHGIVNFFEVGQMGIEHALLPEKGLVLPGDVVIGADSHTCTYGALTCFSTGVGSTDMAAAMATGKAWFKVPEAIKFVLKGNLQKWVSGKDVILYIIGKIGVDGALYKSMEFTGNIKALSIDDRFTIANMAIEAGAKNGIFDFDEITEAYVKGRAKREYKVFERDEDAEYSEVYEINLDEIRPQVAFPHLPENTRSIDEVGKVKIDQVVIGSCTNGRLSDMEIAYKILKGKKVHPDVRLLIFPATQEIYLECVKRGYIEEFIKAGAAVSTPTCGPCLGGHMGILARGERALATTNRNFVGRMGHPESEVYLSSPAVAAASAIAGYIVSPEEVE</sequence>
<evidence type="ECO:0000255" key="1">
    <source>
        <dbReference type="HAMAP-Rule" id="MF_01027"/>
    </source>
</evidence>
<name>LEUC_THEPX</name>
<feature type="chain" id="PRO_1000135739" description="3-isopropylmalate dehydratase large subunit">
    <location>
        <begin position="1"/>
        <end position="418"/>
    </location>
</feature>
<feature type="binding site" evidence="1">
    <location>
        <position position="298"/>
    </location>
    <ligand>
        <name>[4Fe-4S] cluster</name>
        <dbReference type="ChEBI" id="CHEBI:49883"/>
    </ligand>
</feature>
<feature type="binding site" evidence="1">
    <location>
        <position position="358"/>
    </location>
    <ligand>
        <name>[4Fe-4S] cluster</name>
        <dbReference type="ChEBI" id="CHEBI:49883"/>
    </ligand>
</feature>
<feature type="binding site" evidence="1">
    <location>
        <position position="361"/>
    </location>
    <ligand>
        <name>[4Fe-4S] cluster</name>
        <dbReference type="ChEBI" id="CHEBI:49883"/>
    </ligand>
</feature>
<gene>
    <name evidence="1" type="primary">leuC</name>
    <name type="ordered locus">Teth514_0015</name>
</gene>
<protein>
    <recommendedName>
        <fullName evidence="1">3-isopropylmalate dehydratase large subunit</fullName>
        <ecNumber evidence="1">4.2.1.33</ecNumber>
    </recommendedName>
    <alternativeName>
        <fullName evidence="1">Alpha-IPM isomerase</fullName>
        <shortName evidence="1">IPMI</shortName>
    </alternativeName>
    <alternativeName>
        <fullName evidence="1">Isopropylmalate isomerase</fullName>
    </alternativeName>
</protein>
<keyword id="KW-0004">4Fe-4S</keyword>
<keyword id="KW-0028">Amino-acid biosynthesis</keyword>
<keyword id="KW-0100">Branched-chain amino acid biosynthesis</keyword>
<keyword id="KW-0408">Iron</keyword>
<keyword id="KW-0411">Iron-sulfur</keyword>
<keyword id="KW-0432">Leucine biosynthesis</keyword>
<keyword id="KW-0456">Lyase</keyword>
<keyword id="KW-0479">Metal-binding</keyword>
<comment type="function">
    <text evidence="1">Catalyzes the isomerization between 2-isopropylmalate and 3-isopropylmalate, via the formation of 2-isopropylmaleate.</text>
</comment>
<comment type="catalytic activity">
    <reaction evidence="1">
        <text>(2R,3S)-3-isopropylmalate = (2S)-2-isopropylmalate</text>
        <dbReference type="Rhea" id="RHEA:32287"/>
        <dbReference type="ChEBI" id="CHEBI:1178"/>
        <dbReference type="ChEBI" id="CHEBI:35121"/>
        <dbReference type="EC" id="4.2.1.33"/>
    </reaction>
</comment>
<comment type="cofactor">
    <cofactor evidence="1">
        <name>[4Fe-4S] cluster</name>
        <dbReference type="ChEBI" id="CHEBI:49883"/>
    </cofactor>
    <text evidence="1">Binds 1 [4Fe-4S] cluster per subunit.</text>
</comment>
<comment type="pathway">
    <text evidence="1">Amino-acid biosynthesis; L-leucine biosynthesis; L-leucine from 3-methyl-2-oxobutanoate: step 2/4.</text>
</comment>
<comment type="subunit">
    <text evidence="1">Heterodimer of LeuC and LeuD.</text>
</comment>
<comment type="similarity">
    <text evidence="1">Belongs to the aconitase/IPM isomerase family. LeuC type 2 subfamily.</text>
</comment>
<proteinExistence type="inferred from homology"/>
<dbReference type="EC" id="4.2.1.33" evidence="1"/>
<dbReference type="EMBL" id="CP000923">
    <property type="protein sequence ID" value="ABY91339.1"/>
    <property type="molecule type" value="Genomic_DNA"/>
</dbReference>
<dbReference type="RefSeq" id="WP_009052044.1">
    <property type="nucleotide sequence ID" value="NC_010320.1"/>
</dbReference>
<dbReference type="SMR" id="B0K0Y2"/>
<dbReference type="KEGG" id="tex:Teth514_0015"/>
<dbReference type="HOGENOM" id="CLU_006714_3_4_9"/>
<dbReference type="UniPathway" id="UPA00048">
    <property type="reaction ID" value="UER00071"/>
</dbReference>
<dbReference type="Proteomes" id="UP000002155">
    <property type="component" value="Chromosome"/>
</dbReference>
<dbReference type="GO" id="GO:0003861">
    <property type="term" value="F:3-isopropylmalate dehydratase activity"/>
    <property type="evidence" value="ECO:0007669"/>
    <property type="project" value="UniProtKB-UniRule"/>
</dbReference>
<dbReference type="GO" id="GO:0051539">
    <property type="term" value="F:4 iron, 4 sulfur cluster binding"/>
    <property type="evidence" value="ECO:0007669"/>
    <property type="project" value="UniProtKB-KW"/>
</dbReference>
<dbReference type="GO" id="GO:0046872">
    <property type="term" value="F:metal ion binding"/>
    <property type="evidence" value="ECO:0007669"/>
    <property type="project" value="UniProtKB-KW"/>
</dbReference>
<dbReference type="GO" id="GO:0009098">
    <property type="term" value="P:L-leucine biosynthetic process"/>
    <property type="evidence" value="ECO:0007669"/>
    <property type="project" value="UniProtKB-UniRule"/>
</dbReference>
<dbReference type="CDD" id="cd01583">
    <property type="entry name" value="IPMI"/>
    <property type="match status" value="1"/>
</dbReference>
<dbReference type="Gene3D" id="3.30.499.10">
    <property type="entry name" value="Aconitase, domain 3"/>
    <property type="match status" value="2"/>
</dbReference>
<dbReference type="HAMAP" id="MF_01027">
    <property type="entry name" value="LeuC_type2"/>
    <property type="match status" value="1"/>
</dbReference>
<dbReference type="InterPro" id="IPR015931">
    <property type="entry name" value="Acnase/IPM_dHydase_lsu_aba_1/3"/>
</dbReference>
<dbReference type="InterPro" id="IPR001030">
    <property type="entry name" value="Acoase/IPM_deHydtase_lsu_aba"/>
</dbReference>
<dbReference type="InterPro" id="IPR018136">
    <property type="entry name" value="Aconitase_4Fe-4S_BS"/>
</dbReference>
<dbReference type="InterPro" id="IPR036008">
    <property type="entry name" value="Aconitase_4Fe-4S_dom"/>
</dbReference>
<dbReference type="InterPro" id="IPR011826">
    <property type="entry name" value="HAcnase/IPMdehydase_lsu_prok"/>
</dbReference>
<dbReference type="InterPro" id="IPR006251">
    <property type="entry name" value="Homoacnase/IPMdehydase_lsu"/>
</dbReference>
<dbReference type="InterPro" id="IPR050067">
    <property type="entry name" value="IPM_dehydratase_rel_enz"/>
</dbReference>
<dbReference type="InterPro" id="IPR033941">
    <property type="entry name" value="IPMI_cat"/>
</dbReference>
<dbReference type="InterPro" id="IPR011823">
    <property type="entry name" value="IsopropMal_deHydtase_lsu_bac"/>
</dbReference>
<dbReference type="NCBIfam" id="TIGR01343">
    <property type="entry name" value="hacA_fam"/>
    <property type="match status" value="1"/>
</dbReference>
<dbReference type="NCBIfam" id="TIGR02086">
    <property type="entry name" value="IPMI_arch"/>
    <property type="match status" value="1"/>
</dbReference>
<dbReference type="NCBIfam" id="TIGR02083">
    <property type="entry name" value="LEU2"/>
    <property type="match status" value="1"/>
</dbReference>
<dbReference type="NCBIfam" id="NF001614">
    <property type="entry name" value="PRK00402.1"/>
    <property type="match status" value="1"/>
</dbReference>
<dbReference type="PANTHER" id="PTHR43822:SF16">
    <property type="entry name" value="3-ISOPROPYLMALATE DEHYDRATASE LARGE SUBUNIT 2"/>
    <property type="match status" value="1"/>
</dbReference>
<dbReference type="PANTHER" id="PTHR43822">
    <property type="entry name" value="HOMOACONITASE, MITOCHONDRIAL-RELATED"/>
    <property type="match status" value="1"/>
</dbReference>
<dbReference type="Pfam" id="PF00330">
    <property type="entry name" value="Aconitase"/>
    <property type="match status" value="1"/>
</dbReference>
<dbReference type="PRINTS" id="PR00415">
    <property type="entry name" value="ACONITASE"/>
</dbReference>
<dbReference type="SUPFAM" id="SSF53732">
    <property type="entry name" value="Aconitase iron-sulfur domain"/>
    <property type="match status" value="1"/>
</dbReference>
<dbReference type="PROSITE" id="PS00450">
    <property type="entry name" value="ACONITASE_1"/>
    <property type="match status" value="1"/>
</dbReference>
<dbReference type="PROSITE" id="PS01244">
    <property type="entry name" value="ACONITASE_2"/>
    <property type="match status" value="1"/>
</dbReference>
<organism>
    <name type="scientific">Thermoanaerobacter sp. (strain X514)</name>
    <dbReference type="NCBI Taxonomy" id="399726"/>
    <lineage>
        <taxon>Bacteria</taxon>
        <taxon>Bacillati</taxon>
        <taxon>Bacillota</taxon>
        <taxon>Clostridia</taxon>
        <taxon>Thermoanaerobacterales</taxon>
        <taxon>Thermoanaerobacteraceae</taxon>
        <taxon>Thermoanaerobacter</taxon>
    </lineage>
</organism>